<accession>Q9HVW0</accession>
<dbReference type="EC" id="5.3.1.13"/>
<dbReference type="EMBL" id="AE004091">
    <property type="protein sequence ID" value="AAG07845.1"/>
    <property type="molecule type" value="Genomic_DNA"/>
</dbReference>
<dbReference type="PIR" id="A83087">
    <property type="entry name" value="A83087"/>
</dbReference>
<dbReference type="RefSeq" id="NP_253147.1">
    <property type="nucleotide sequence ID" value="NC_002516.2"/>
</dbReference>
<dbReference type="RefSeq" id="WP_003134758.1">
    <property type="nucleotide sequence ID" value="NZ_QZGE01000004.1"/>
</dbReference>
<dbReference type="SMR" id="Q9HVW0"/>
<dbReference type="FunCoup" id="Q9HVW0">
    <property type="interactions" value="204"/>
</dbReference>
<dbReference type="STRING" id="208964.PA4457"/>
<dbReference type="PaxDb" id="208964-PA4457"/>
<dbReference type="DNASU" id="881001"/>
<dbReference type="GeneID" id="881001"/>
<dbReference type="KEGG" id="pae:PA4457"/>
<dbReference type="PATRIC" id="fig|208964.12.peg.4667"/>
<dbReference type="PseudoCAP" id="PA4457"/>
<dbReference type="HOGENOM" id="CLU_040681_13_1_6"/>
<dbReference type="InParanoid" id="Q9HVW0"/>
<dbReference type="OrthoDB" id="9762536at2"/>
<dbReference type="PhylomeDB" id="Q9HVW0"/>
<dbReference type="BioCyc" id="PAER208964:G1FZ6-4546-MONOMER"/>
<dbReference type="BRENDA" id="5.3.1.13">
    <property type="organism ID" value="5087"/>
</dbReference>
<dbReference type="UniPathway" id="UPA00030"/>
<dbReference type="UniPathway" id="UPA00357">
    <property type="reaction ID" value="UER00473"/>
</dbReference>
<dbReference type="Proteomes" id="UP000002438">
    <property type="component" value="Chromosome"/>
</dbReference>
<dbReference type="GO" id="GO:0019146">
    <property type="term" value="F:arabinose-5-phosphate isomerase activity"/>
    <property type="evidence" value="ECO:0007669"/>
    <property type="project" value="UniProtKB-EC"/>
</dbReference>
<dbReference type="GO" id="GO:0097367">
    <property type="term" value="F:carbohydrate derivative binding"/>
    <property type="evidence" value="ECO:0007669"/>
    <property type="project" value="InterPro"/>
</dbReference>
<dbReference type="GO" id="GO:0046872">
    <property type="term" value="F:metal ion binding"/>
    <property type="evidence" value="ECO:0007669"/>
    <property type="project" value="UniProtKB-KW"/>
</dbReference>
<dbReference type="GO" id="GO:0009103">
    <property type="term" value="P:lipopolysaccharide biosynthetic process"/>
    <property type="evidence" value="ECO:0007669"/>
    <property type="project" value="UniProtKB-UniPathway"/>
</dbReference>
<dbReference type="CDD" id="cd04604">
    <property type="entry name" value="CBS_pair_SIS_assoc"/>
    <property type="match status" value="1"/>
</dbReference>
<dbReference type="CDD" id="cd05014">
    <property type="entry name" value="SIS_Kpsf"/>
    <property type="match status" value="1"/>
</dbReference>
<dbReference type="FunFam" id="3.10.580.10:FF:000007">
    <property type="entry name" value="Arabinose 5-phosphate isomerase"/>
    <property type="match status" value="1"/>
</dbReference>
<dbReference type="FunFam" id="3.40.50.10490:FF:000011">
    <property type="entry name" value="Arabinose 5-phosphate isomerase"/>
    <property type="match status" value="1"/>
</dbReference>
<dbReference type="Gene3D" id="3.10.580.10">
    <property type="entry name" value="CBS-domain"/>
    <property type="match status" value="1"/>
</dbReference>
<dbReference type="Gene3D" id="3.40.50.10490">
    <property type="entry name" value="Glucose-6-phosphate isomerase like protein, domain 1"/>
    <property type="match status" value="1"/>
</dbReference>
<dbReference type="InterPro" id="IPR000644">
    <property type="entry name" value="CBS_dom"/>
</dbReference>
<dbReference type="InterPro" id="IPR046342">
    <property type="entry name" value="CBS_dom_sf"/>
</dbReference>
<dbReference type="InterPro" id="IPR050986">
    <property type="entry name" value="GutQ/KpsF_isomerases"/>
</dbReference>
<dbReference type="InterPro" id="IPR004800">
    <property type="entry name" value="KdsD/KpsF-type"/>
</dbReference>
<dbReference type="InterPro" id="IPR001347">
    <property type="entry name" value="SIS_dom"/>
</dbReference>
<dbReference type="InterPro" id="IPR046348">
    <property type="entry name" value="SIS_dom_sf"/>
</dbReference>
<dbReference type="InterPro" id="IPR035474">
    <property type="entry name" value="SIS_Kpsf"/>
</dbReference>
<dbReference type="NCBIfam" id="TIGR00393">
    <property type="entry name" value="kpsF"/>
    <property type="match status" value="1"/>
</dbReference>
<dbReference type="PANTHER" id="PTHR42745">
    <property type="match status" value="1"/>
</dbReference>
<dbReference type="PANTHER" id="PTHR42745:SF1">
    <property type="entry name" value="ARABINOSE 5-PHOSPHATE ISOMERASE KDSD"/>
    <property type="match status" value="1"/>
</dbReference>
<dbReference type="Pfam" id="PF00571">
    <property type="entry name" value="CBS"/>
    <property type="match status" value="2"/>
</dbReference>
<dbReference type="Pfam" id="PF01380">
    <property type="entry name" value="SIS"/>
    <property type="match status" value="1"/>
</dbReference>
<dbReference type="PIRSF" id="PIRSF004692">
    <property type="entry name" value="KdsD_KpsF"/>
    <property type="match status" value="1"/>
</dbReference>
<dbReference type="SMART" id="SM00116">
    <property type="entry name" value="CBS"/>
    <property type="match status" value="2"/>
</dbReference>
<dbReference type="SUPFAM" id="SSF53697">
    <property type="entry name" value="SIS domain"/>
    <property type="match status" value="1"/>
</dbReference>
<dbReference type="PROSITE" id="PS51371">
    <property type="entry name" value="CBS"/>
    <property type="match status" value="2"/>
</dbReference>
<dbReference type="PROSITE" id="PS51464">
    <property type="entry name" value="SIS"/>
    <property type="match status" value="1"/>
</dbReference>
<sequence length="326" mass="34198">MNMSQNLDFIHSAQRTIGLERDAVDSLLARIGDDFVKACELLLAGKGRVVVVGMGKSGHVGKKIAATLASTGTPSFFVHPAEASHGDMGMITKDDVVLALSNSGSTAEIVTLLPLIKRLGITLISMTGNPESPLAKAAEVNLDASVGQEACPLNLAPTSSTTVTLVLGDALAIALLEARGFTAEDFAFSHPGGALGRRLLLKVEDVMHVGEGLPQVLLGTSLTGALMEMTRKGLGMTVVLDEHGKLAGIFTDGDLRRALDRGIDVRQVTIDQVMTVHGKTVRAEILAAEALKIMEDNKIGALVVVDADDRPVGALNMHDLLRAGVM</sequence>
<proteinExistence type="evidence at protein level"/>
<keyword id="KW-0119">Carbohydrate metabolism</keyword>
<keyword id="KW-0129">CBS domain</keyword>
<keyword id="KW-0413">Isomerase</keyword>
<keyword id="KW-0448">Lipopolysaccharide biosynthesis</keyword>
<keyword id="KW-0479">Metal-binding</keyword>
<keyword id="KW-1185">Reference proteome</keyword>
<keyword id="KW-0677">Repeat</keyword>
<keyword id="KW-0862">Zinc</keyword>
<evidence type="ECO:0000250" key="1"/>
<evidence type="ECO:0000255" key="2">
    <source>
        <dbReference type="PROSITE-ProRule" id="PRU00703"/>
    </source>
</evidence>
<evidence type="ECO:0000255" key="3">
    <source>
        <dbReference type="PROSITE-ProRule" id="PRU00797"/>
    </source>
</evidence>
<evidence type="ECO:0000269" key="4">
    <source>
    </source>
</evidence>
<evidence type="ECO:0000305" key="5"/>
<gene>
    <name type="primary">kdsD</name>
    <name type="ordered locus">PA4457</name>
</gene>
<protein>
    <recommendedName>
        <fullName>Arabinose 5-phosphate isomerase KdsD</fullName>
        <shortName>API</shortName>
        <ecNumber>5.3.1.13</ecNumber>
    </recommendedName>
    <alternativeName>
        <fullName>Pa-KdsD</fullName>
    </alternativeName>
</protein>
<comment type="function">
    <text evidence="4">Involved in the biosynthesis of 3-deoxy-D-manno-octulosonate (KDO), a unique 8-carbon sugar component of lipopolysaccharides (LPSs). Catalyzes the reversible aldol-ketol isomerization between D-ribulose 5-phosphate (Ru5P) and D-arabinose 5-phosphate (A5P).</text>
</comment>
<comment type="catalytic activity">
    <reaction evidence="4">
        <text>D-arabinose 5-phosphate = D-ribulose 5-phosphate</text>
        <dbReference type="Rhea" id="RHEA:23104"/>
        <dbReference type="ChEBI" id="CHEBI:57693"/>
        <dbReference type="ChEBI" id="CHEBI:58121"/>
        <dbReference type="EC" id="5.3.1.13"/>
    </reaction>
</comment>
<comment type="biophysicochemical properties">
    <temperatureDependence>
        <text evidence="4">Specific activity decreases significantly at 5 degrees Celsius compared to specific activity at 37 degrees Celsius.</text>
    </temperatureDependence>
</comment>
<comment type="pathway">
    <text>Carbohydrate biosynthesis; 3-deoxy-D-manno-octulosonate biosynthesis; 3-deoxy-D-manno-octulosonate from D-ribulose 5-phosphate: step 1/3.</text>
</comment>
<comment type="pathway">
    <text>Bacterial outer membrane biogenesis; lipopolysaccharide biosynthesis.</text>
</comment>
<comment type="subunit">
    <text evidence="1">Homotetramer.</text>
</comment>
<comment type="disruption phenotype">
    <text evidence="4">Cells are not viable.</text>
</comment>
<comment type="similarity">
    <text evidence="5">Belongs to the SIS family. GutQ/KpsF subfamily.</text>
</comment>
<name>KDSD_PSEAE</name>
<reference key="1">
    <citation type="journal article" date="2000" name="Nature">
        <title>Complete genome sequence of Pseudomonas aeruginosa PAO1, an opportunistic pathogen.</title>
        <authorList>
            <person name="Stover C.K."/>
            <person name="Pham X.-Q.T."/>
            <person name="Erwin A.L."/>
            <person name="Mizoguchi S.D."/>
            <person name="Warrener P."/>
            <person name="Hickey M.J."/>
            <person name="Brinkman F.S.L."/>
            <person name="Hufnagle W.O."/>
            <person name="Kowalik D.J."/>
            <person name="Lagrou M."/>
            <person name="Garber R.L."/>
            <person name="Goltry L."/>
            <person name="Tolentino E."/>
            <person name="Westbrock-Wadman S."/>
            <person name="Yuan Y."/>
            <person name="Brody L.L."/>
            <person name="Coulter S.N."/>
            <person name="Folger K.R."/>
            <person name="Kas A."/>
            <person name="Larbig K."/>
            <person name="Lim R.M."/>
            <person name="Smith K.A."/>
            <person name="Spencer D.H."/>
            <person name="Wong G.K.-S."/>
            <person name="Wu Z."/>
            <person name="Paulsen I.T."/>
            <person name="Reizer J."/>
            <person name="Saier M.H. Jr."/>
            <person name="Hancock R.E.W."/>
            <person name="Lory S."/>
            <person name="Olson M.V."/>
        </authorList>
    </citation>
    <scope>NUCLEOTIDE SEQUENCE [LARGE SCALE GENOMIC DNA]</scope>
    <source>
        <strain>ATCC 15692 / DSM 22644 / CIP 104116 / JCM 14847 / LMG 12228 / 1C / PRS 101 / PAO1</strain>
    </source>
</reference>
<reference key="2">
    <citation type="journal article" date="2011" name="ChemBioChem">
        <title>Targeting bacterial membranes: identification of Pseudomonas aeruginosa D-arabinose-5P isomerase and NMR characterisation of its substrate recognition and binding properties.</title>
        <authorList>
            <person name="Airoldi C."/>
            <person name="Sommaruga S."/>
            <person name="Merlo S."/>
            <person name="Sperandeo P."/>
            <person name="Cipolla L."/>
            <person name="Polissi A."/>
            <person name="Nicotra F."/>
        </authorList>
    </citation>
    <scope>FUNCTION</scope>
    <scope>CATALYTIC ACTIVITY</scope>
    <scope>BIOPHYSICOCHEMICAL PROPERTIES</scope>
    <scope>NMR SPECTROSCOPY</scope>
    <scope>SUBSTRATE SPECIFICITY</scope>
    <scope>DISRUPTION PHENOTYPE</scope>
    <scope>MUTAGENESIS OF LYS-56; HIS-85 AND HIS-190</scope>
    <source>
        <strain>ATCC 15692 / DSM 22644 / CIP 104116 / JCM 14847 / LMG 12228 / 1C / PRS 101 / PAO1</strain>
    </source>
</reference>
<feature type="chain" id="PRO_0000417165" description="Arabinose 5-phosphate isomerase KdsD">
    <location>
        <begin position="1"/>
        <end position="326"/>
    </location>
</feature>
<feature type="domain" description="SIS" evidence="3">
    <location>
        <begin position="38"/>
        <end position="181"/>
    </location>
</feature>
<feature type="domain" description="CBS 1" evidence="2">
    <location>
        <begin position="207"/>
        <end position="265"/>
    </location>
</feature>
<feature type="domain" description="CBS 2" evidence="2">
    <location>
        <begin position="274"/>
        <end position="326"/>
    </location>
</feature>
<feature type="binding site" evidence="1">
    <location>
        <begin position="72"/>
        <end position="73"/>
    </location>
    <ligand>
        <name>substrate</name>
    </ligand>
</feature>
<feature type="binding site" evidence="1">
    <location>
        <position position="79"/>
    </location>
    <ligand>
        <name>substrate</name>
    </ligand>
</feature>
<feature type="binding site" evidence="1">
    <location>
        <position position="79"/>
    </location>
    <ligand>
        <name>Zn(2+)</name>
        <dbReference type="ChEBI" id="CHEBI:29105"/>
    </ligand>
</feature>
<feature type="binding site" evidence="5">
    <location>
        <position position="85"/>
    </location>
    <ligand>
        <name>substrate</name>
    </ligand>
</feature>
<feature type="binding site" evidence="1">
    <location>
        <begin position="111"/>
        <end position="120"/>
    </location>
    <ligand>
        <name>substrate</name>
    </ligand>
</feature>
<feature type="binding site" evidence="1">
    <location>
        <begin position="145"/>
        <end position="147"/>
    </location>
    <ligand>
        <name>substrate</name>
    </ligand>
</feature>
<feature type="site" description="Catalytically relevant">
    <location>
        <position position="56"/>
    </location>
</feature>
<feature type="site" description="Catalytically relevant" evidence="1">
    <location>
        <position position="108"/>
    </location>
</feature>
<feature type="site" description="Catalytically relevant" evidence="1">
    <location>
        <position position="149"/>
    </location>
</feature>
<feature type="site" description="Catalytically relevant">
    <location>
        <position position="190"/>
    </location>
</feature>
<feature type="mutagenesis site" description="100-fold reduction in catalytic activity compared to the wild-type." evidence="4">
    <original>K</original>
    <variation>A</variation>
    <location>
        <position position="56"/>
    </location>
</feature>
<feature type="mutagenesis site" description="200-fold reduction in catalytic activity compared to the wild-type." evidence="4">
    <original>H</original>
    <variation>A</variation>
    <location>
        <position position="85"/>
    </location>
</feature>
<feature type="mutagenesis site" description="400-fold reduction in catalytic activity compared to the wild-type." evidence="4">
    <original>H</original>
    <variation>A</variation>
    <location>
        <position position="190"/>
    </location>
</feature>
<organism>
    <name type="scientific">Pseudomonas aeruginosa (strain ATCC 15692 / DSM 22644 / CIP 104116 / JCM 14847 / LMG 12228 / 1C / PRS 101 / PAO1)</name>
    <dbReference type="NCBI Taxonomy" id="208964"/>
    <lineage>
        <taxon>Bacteria</taxon>
        <taxon>Pseudomonadati</taxon>
        <taxon>Pseudomonadota</taxon>
        <taxon>Gammaproteobacteria</taxon>
        <taxon>Pseudomonadales</taxon>
        <taxon>Pseudomonadaceae</taxon>
        <taxon>Pseudomonas</taxon>
    </lineage>
</organism>